<name>F120C_HUMAN</name>
<gene>
    <name type="primary">FAM120C</name>
    <name type="synonym">CXorf17</name>
</gene>
<accession>Q9NX05</accession>
<accession>B2RMT7</accession>
<reference key="1">
    <citation type="journal article" date="2003" name="Gene">
        <title>The human gene CXorf17 encodes a member of a novel family of putative transmembrane proteins: cDNA cloning and characterization of CXorf17 and its mouse ortholog orf34.</title>
        <authorList>
            <person name="Holden S."/>
            <person name="Raymond F.L."/>
        </authorList>
    </citation>
    <scope>NUCLEOTIDE SEQUENCE [MRNA] (ISOFORM 1)</scope>
    <scope>TISSUE SPECIFICITY</scope>
    <source>
        <tissue>Brain</tissue>
    </source>
</reference>
<reference key="2">
    <citation type="submission" date="2002-06" db="EMBL/GenBank/DDBJ databases">
        <title>Cloning and identification of genes which are differentially expressed in carcinoma.</title>
        <authorList>
            <person name="Dong X.-Y."/>
            <person name="Chen W.-F."/>
        </authorList>
    </citation>
    <scope>NUCLEOTIDE SEQUENCE [MRNA] (ISOFORM 2)</scope>
</reference>
<reference key="3">
    <citation type="journal article" date="2004" name="Nat. Genet.">
        <title>Complete sequencing and characterization of 21,243 full-length human cDNAs.</title>
        <authorList>
            <person name="Ota T."/>
            <person name="Suzuki Y."/>
            <person name="Nishikawa T."/>
            <person name="Otsuki T."/>
            <person name="Sugiyama T."/>
            <person name="Irie R."/>
            <person name="Wakamatsu A."/>
            <person name="Hayashi K."/>
            <person name="Sato H."/>
            <person name="Nagai K."/>
            <person name="Kimura K."/>
            <person name="Makita H."/>
            <person name="Sekine M."/>
            <person name="Obayashi M."/>
            <person name="Nishi T."/>
            <person name="Shibahara T."/>
            <person name="Tanaka T."/>
            <person name="Ishii S."/>
            <person name="Yamamoto J."/>
            <person name="Saito K."/>
            <person name="Kawai Y."/>
            <person name="Isono Y."/>
            <person name="Nakamura Y."/>
            <person name="Nagahari K."/>
            <person name="Murakami K."/>
            <person name="Yasuda T."/>
            <person name="Iwayanagi T."/>
            <person name="Wagatsuma M."/>
            <person name="Shiratori A."/>
            <person name="Sudo H."/>
            <person name="Hosoiri T."/>
            <person name="Kaku Y."/>
            <person name="Kodaira H."/>
            <person name="Kondo H."/>
            <person name="Sugawara M."/>
            <person name="Takahashi M."/>
            <person name="Kanda K."/>
            <person name="Yokoi T."/>
            <person name="Furuya T."/>
            <person name="Kikkawa E."/>
            <person name="Omura Y."/>
            <person name="Abe K."/>
            <person name="Kamihara K."/>
            <person name="Katsuta N."/>
            <person name="Sato K."/>
            <person name="Tanikawa M."/>
            <person name="Yamazaki M."/>
            <person name="Ninomiya K."/>
            <person name="Ishibashi T."/>
            <person name="Yamashita H."/>
            <person name="Murakawa K."/>
            <person name="Fujimori K."/>
            <person name="Tanai H."/>
            <person name="Kimata M."/>
            <person name="Watanabe M."/>
            <person name="Hiraoka S."/>
            <person name="Chiba Y."/>
            <person name="Ishida S."/>
            <person name="Ono Y."/>
            <person name="Takiguchi S."/>
            <person name="Watanabe S."/>
            <person name="Yosida M."/>
            <person name="Hotuta T."/>
            <person name="Kusano J."/>
            <person name="Kanehori K."/>
            <person name="Takahashi-Fujii A."/>
            <person name="Hara H."/>
            <person name="Tanase T.-O."/>
            <person name="Nomura Y."/>
            <person name="Togiya S."/>
            <person name="Komai F."/>
            <person name="Hara R."/>
            <person name="Takeuchi K."/>
            <person name="Arita M."/>
            <person name="Imose N."/>
            <person name="Musashino K."/>
            <person name="Yuuki H."/>
            <person name="Oshima A."/>
            <person name="Sasaki N."/>
            <person name="Aotsuka S."/>
            <person name="Yoshikawa Y."/>
            <person name="Matsunawa H."/>
            <person name="Ichihara T."/>
            <person name="Shiohata N."/>
            <person name="Sano S."/>
            <person name="Moriya S."/>
            <person name="Momiyama H."/>
            <person name="Satoh N."/>
            <person name="Takami S."/>
            <person name="Terashima Y."/>
            <person name="Suzuki O."/>
            <person name="Nakagawa S."/>
            <person name="Senoh A."/>
            <person name="Mizoguchi H."/>
            <person name="Goto Y."/>
            <person name="Shimizu F."/>
            <person name="Wakebe H."/>
            <person name="Hishigaki H."/>
            <person name="Watanabe T."/>
            <person name="Sugiyama A."/>
            <person name="Takemoto M."/>
            <person name="Kawakami B."/>
            <person name="Yamazaki M."/>
            <person name="Watanabe K."/>
            <person name="Kumagai A."/>
            <person name="Itakura S."/>
            <person name="Fukuzumi Y."/>
            <person name="Fujimori Y."/>
            <person name="Komiyama M."/>
            <person name="Tashiro H."/>
            <person name="Tanigami A."/>
            <person name="Fujiwara T."/>
            <person name="Ono T."/>
            <person name="Yamada K."/>
            <person name="Fujii Y."/>
            <person name="Ozaki K."/>
            <person name="Hirao M."/>
            <person name="Ohmori Y."/>
            <person name="Kawabata A."/>
            <person name="Hikiji T."/>
            <person name="Kobatake N."/>
            <person name="Inagaki H."/>
            <person name="Ikema Y."/>
            <person name="Okamoto S."/>
            <person name="Okitani R."/>
            <person name="Kawakami T."/>
            <person name="Noguchi S."/>
            <person name="Itoh T."/>
            <person name="Shigeta K."/>
            <person name="Senba T."/>
            <person name="Matsumura K."/>
            <person name="Nakajima Y."/>
            <person name="Mizuno T."/>
            <person name="Morinaga M."/>
            <person name="Sasaki M."/>
            <person name="Togashi T."/>
            <person name="Oyama M."/>
            <person name="Hata H."/>
            <person name="Watanabe M."/>
            <person name="Komatsu T."/>
            <person name="Mizushima-Sugano J."/>
            <person name="Satoh T."/>
            <person name="Shirai Y."/>
            <person name="Takahashi Y."/>
            <person name="Nakagawa K."/>
            <person name="Okumura K."/>
            <person name="Nagase T."/>
            <person name="Nomura N."/>
            <person name="Kikuchi H."/>
            <person name="Masuho Y."/>
            <person name="Yamashita R."/>
            <person name="Nakai K."/>
            <person name="Yada T."/>
            <person name="Nakamura Y."/>
            <person name="Ohara O."/>
            <person name="Isogai T."/>
            <person name="Sugano S."/>
        </authorList>
    </citation>
    <scope>NUCLEOTIDE SEQUENCE [LARGE SCALE MRNA] (ISOFORM 2)</scope>
    <source>
        <tissue>Signet-ring cell carcinoma</tissue>
    </source>
</reference>
<reference key="4">
    <citation type="journal article" date="2005" name="Nature">
        <title>The DNA sequence of the human X chromosome.</title>
        <authorList>
            <person name="Ross M.T."/>
            <person name="Grafham D.V."/>
            <person name="Coffey A.J."/>
            <person name="Scherer S."/>
            <person name="McLay K."/>
            <person name="Muzny D."/>
            <person name="Platzer M."/>
            <person name="Howell G.R."/>
            <person name="Burrows C."/>
            <person name="Bird C.P."/>
            <person name="Frankish A."/>
            <person name="Lovell F.L."/>
            <person name="Howe K.L."/>
            <person name="Ashurst J.L."/>
            <person name="Fulton R.S."/>
            <person name="Sudbrak R."/>
            <person name="Wen G."/>
            <person name="Jones M.C."/>
            <person name="Hurles M.E."/>
            <person name="Andrews T.D."/>
            <person name="Scott C.E."/>
            <person name="Searle S."/>
            <person name="Ramser J."/>
            <person name="Whittaker A."/>
            <person name="Deadman R."/>
            <person name="Carter N.P."/>
            <person name="Hunt S.E."/>
            <person name="Chen R."/>
            <person name="Cree A."/>
            <person name="Gunaratne P."/>
            <person name="Havlak P."/>
            <person name="Hodgson A."/>
            <person name="Metzker M.L."/>
            <person name="Richards S."/>
            <person name="Scott G."/>
            <person name="Steffen D."/>
            <person name="Sodergren E."/>
            <person name="Wheeler D.A."/>
            <person name="Worley K.C."/>
            <person name="Ainscough R."/>
            <person name="Ambrose K.D."/>
            <person name="Ansari-Lari M.A."/>
            <person name="Aradhya S."/>
            <person name="Ashwell R.I."/>
            <person name="Babbage A.K."/>
            <person name="Bagguley C.L."/>
            <person name="Ballabio A."/>
            <person name="Banerjee R."/>
            <person name="Barker G.E."/>
            <person name="Barlow K.F."/>
            <person name="Barrett I.P."/>
            <person name="Bates K.N."/>
            <person name="Beare D.M."/>
            <person name="Beasley H."/>
            <person name="Beasley O."/>
            <person name="Beck A."/>
            <person name="Bethel G."/>
            <person name="Blechschmidt K."/>
            <person name="Brady N."/>
            <person name="Bray-Allen S."/>
            <person name="Bridgeman A.M."/>
            <person name="Brown A.J."/>
            <person name="Brown M.J."/>
            <person name="Bonnin D."/>
            <person name="Bruford E.A."/>
            <person name="Buhay C."/>
            <person name="Burch P."/>
            <person name="Burford D."/>
            <person name="Burgess J."/>
            <person name="Burrill W."/>
            <person name="Burton J."/>
            <person name="Bye J.M."/>
            <person name="Carder C."/>
            <person name="Carrel L."/>
            <person name="Chako J."/>
            <person name="Chapman J.C."/>
            <person name="Chavez D."/>
            <person name="Chen E."/>
            <person name="Chen G."/>
            <person name="Chen Y."/>
            <person name="Chen Z."/>
            <person name="Chinault C."/>
            <person name="Ciccodicola A."/>
            <person name="Clark S.Y."/>
            <person name="Clarke G."/>
            <person name="Clee C.M."/>
            <person name="Clegg S."/>
            <person name="Clerc-Blankenburg K."/>
            <person name="Clifford K."/>
            <person name="Cobley V."/>
            <person name="Cole C.G."/>
            <person name="Conquer J.S."/>
            <person name="Corby N."/>
            <person name="Connor R.E."/>
            <person name="David R."/>
            <person name="Davies J."/>
            <person name="Davis C."/>
            <person name="Davis J."/>
            <person name="Delgado O."/>
            <person name="Deshazo D."/>
            <person name="Dhami P."/>
            <person name="Ding Y."/>
            <person name="Dinh H."/>
            <person name="Dodsworth S."/>
            <person name="Draper H."/>
            <person name="Dugan-Rocha S."/>
            <person name="Dunham A."/>
            <person name="Dunn M."/>
            <person name="Durbin K.J."/>
            <person name="Dutta I."/>
            <person name="Eades T."/>
            <person name="Ellwood M."/>
            <person name="Emery-Cohen A."/>
            <person name="Errington H."/>
            <person name="Evans K.L."/>
            <person name="Faulkner L."/>
            <person name="Francis F."/>
            <person name="Frankland J."/>
            <person name="Fraser A.E."/>
            <person name="Galgoczy P."/>
            <person name="Gilbert J."/>
            <person name="Gill R."/>
            <person name="Gloeckner G."/>
            <person name="Gregory S.G."/>
            <person name="Gribble S."/>
            <person name="Griffiths C."/>
            <person name="Grocock R."/>
            <person name="Gu Y."/>
            <person name="Gwilliam R."/>
            <person name="Hamilton C."/>
            <person name="Hart E.A."/>
            <person name="Hawes A."/>
            <person name="Heath P.D."/>
            <person name="Heitmann K."/>
            <person name="Hennig S."/>
            <person name="Hernandez J."/>
            <person name="Hinzmann B."/>
            <person name="Ho S."/>
            <person name="Hoffs M."/>
            <person name="Howden P.J."/>
            <person name="Huckle E.J."/>
            <person name="Hume J."/>
            <person name="Hunt P.J."/>
            <person name="Hunt A.R."/>
            <person name="Isherwood J."/>
            <person name="Jacob L."/>
            <person name="Johnson D."/>
            <person name="Jones S."/>
            <person name="de Jong P.J."/>
            <person name="Joseph S.S."/>
            <person name="Keenan S."/>
            <person name="Kelly S."/>
            <person name="Kershaw J.K."/>
            <person name="Khan Z."/>
            <person name="Kioschis P."/>
            <person name="Klages S."/>
            <person name="Knights A.J."/>
            <person name="Kosiura A."/>
            <person name="Kovar-Smith C."/>
            <person name="Laird G.K."/>
            <person name="Langford C."/>
            <person name="Lawlor S."/>
            <person name="Leversha M."/>
            <person name="Lewis L."/>
            <person name="Liu W."/>
            <person name="Lloyd C."/>
            <person name="Lloyd D.M."/>
            <person name="Loulseged H."/>
            <person name="Loveland J.E."/>
            <person name="Lovell J.D."/>
            <person name="Lozado R."/>
            <person name="Lu J."/>
            <person name="Lyne R."/>
            <person name="Ma J."/>
            <person name="Maheshwari M."/>
            <person name="Matthews L.H."/>
            <person name="McDowall J."/>
            <person name="McLaren S."/>
            <person name="McMurray A."/>
            <person name="Meidl P."/>
            <person name="Meitinger T."/>
            <person name="Milne S."/>
            <person name="Miner G."/>
            <person name="Mistry S.L."/>
            <person name="Morgan M."/>
            <person name="Morris S."/>
            <person name="Mueller I."/>
            <person name="Mullikin J.C."/>
            <person name="Nguyen N."/>
            <person name="Nordsiek G."/>
            <person name="Nyakatura G."/>
            <person name="O'dell C.N."/>
            <person name="Okwuonu G."/>
            <person name="Palmer S."/>
            <person name="Pandian R."/>
            <person name="Parker D."/>
            <person name="Parrish J."/>
            <person name="Pasternak S."/>
            <person name="Patel D."/>
            <person name="Pearce A.V."/>
            <person name="Pearson D.M."/>
            <person name="Pelan S.E."/>
            <person name="Perez L."/>
            <person name="Porter K.M."/>
            <person name="Ramsey Y."/>
            <person name="Reichwald K."/>
            <person name="Rhodes S."/>
            <person name="Ridler K.A."/>
            <person name="Schlessinger D."/>
            <person name="Schueler M.G."/>
            <person name="Sehra H.K."/>
            <person name="Shaw-Smith C."/>
            <person name="Shen H."/>
            <person name="Sheridan E.M."/>
            <person name="Shownkeen R."/>
            <person name="Skuce C.D."/>
            <person name="Smith M.L."/>
            <person name="Sotheran E.C."/>
            <person name="Steingruber H.E."/>
            <person name="Steward C.A."/>
            <person name="Storey R."/>
            <person name="Swann R.M."/>
            <person name="Swarbreck D."/>
            <person name="Tabor P.E."/>
            <person name="Taudien S."/>
            <person name="Taylor T."/>
            <person name="Teague B."/>
            <person name="Thomas K."/>
            <person name="Thorpe A."/>
            <person name="Timms K."/>
            <person name="Tracey A."/>
            <person name="Trevanion S."/>
            <person name="Tromans A.C."/>
            <person name="d'Urso M."/>
            <person name="Verduzco D."/>
            <person name="Villasana D."/>
            <person name="Waldron L."/>
            <person name="Wall M."/>
            <person name="Wang Q."/>
            <person name="Warren J."/>
            <person name="Warry G.L."/>
            <person name="Wei X."/>
            <person name="West A."/>
            <person name="Whitehead S.L."/>
            <person name="Whiteley M.N."/>
            <person name="Wilkinson J.E."/>
            <person name="Willey D.L."/>
            <person name="Williams G."/>
            <person name="Williams L."/>
            <person name="Williamson A."/>
            <person name="Williamson H."/>
            <person name="Wilming L."/>
            <person name="Woodmansey R.L."/>
            <person name="Wray P.W."/>
            <person name="Yen J."/>
            <person name="Zhang J."/>
            <person name="Zhou J."/>
            <person name="Zoghbi H."/>
            <person name="Zorilla S."/>
            <person name="Buck D."/>
            <person name="Reinhardt R."/>
            <person name="Poustka A."/>
            <person name="Rosenthal A."/>
            <person name="Lehrach H."/>
            <person name="Meindl A."/>
            <person name="Minx P.J."/>
            <person name="Hillier L.W."/>
            <person name="Willard H.F."/>
            <person name="Wilson R.K."/>
            <person name="Waterston R.H."/>
            <person name="Rice C.M."/>
            <person name="Vaudin M."/>
            <person name="Coulson A."/>
            <person name="Nelson D.L."/>
            <person name="Weinstock G."/>
            <person name="Sulston J.E."/>
            <person name="Durbin R.M."/>
            <person name="Hubbard T."/>
            <person name="Gibbs R.A."/>
            <person name="Beck S."/>
            <person name="Rogers J."/>
            <person name="Bentley D.R."/>
        </authorList>
    </citation>
    <scope>NUCLEOTIDE SEQUENCE [LARGE SCALE GENOMIC DNA]</scope>
</reference>
<reference key="5">
    <citation type="journal article" date="2004" name="Genome Res.">
        <title>The status, quality, and expansion of the NIH full-length cDNA project: the Mammalian Gene Collection (MGC).</title>
        <authorList>
            <consortium name="The MGC Project Team"/>
        </authorList>
    </citation>
    <scope>NUCLEOTIDE SEQUENCE [LARGE SCALE MRNA] (ISOFORMS 1 AND 2)</scope>
    <source>
        <tissue>Brain</tissue>
        <tissue>Skin</tissue>
    </source>
</reference>
<reference key="6">
    <citation type="journal article" date="2017" name="Nat. Struct. Mol. Biol.">
        <title>Site-specific mapping of the human SUMO proteome reveals co-modification with phosphorylation.</title>
        <authorList>
            <person name="Hendriks I.A."/>
            <person name="Lyon D."/>
            <person name="Young C."/>
            <person name="Jensen L.J."/>
            <person name="Vertegaal A.C."/>
            <person name="Nielsen M.L."/>
        </authorList>
    </citation>
    <scope>SUMOYLATION [LARGE SCALE ANALYSIS] AT LYS-1042</scope>
    <scope>IDENTIFICATION BY MASS SPECTROMETRY [LARGE SCALE ANALYSIS]</scope>
</reference>
<evidence type="ECO:0000250" key="1">
    <source>
        <dbReference type="UniProtKB" id="Q8C3F2"/>
    </source>
</evidence>
<evidence type="ECO:0000256" key="2">
    <source>
        <dbReference type="SAM" id="MobiDB-lite"/>
    </source>
</evidence>
<evidence type="ECO:0000269" key="3">
    <source>
    </source>
</evidence>
<evidence type="ECO:0000303" key="4">
    <source>
    </source>
</evidence>
<evidence type="ECO:0000303" key="5">
    <source>
    </source>
</evidence>
<evidence type="ECO:0000303" key="6">
    <source ref="2"/>
</evidence>
<evidence type="ECO:0000305" key="7"/>
<evidence type="ECO:0007744" key="8">
    <source>
    </source>
</evidence>
<feature type="chain" id="PRO_0000221628" description="Constitutive coactivator of PPAR-gamma-like protein 2">
    <location>
        <begin position="1"/>
        <end position="1096"/>
    </location>
</feature>
<feature type="region of interest" description="Disordered" evidence="2">
    <location>
        <begin position="35"/>
        <end position="113"/>
    </location>
</feature>
<feature type="region of interest" description="Disordered" evidence="2">
    <location>
        <begin position="508"/>
        <end position="579"/>
    </location>
</feature>
<feature type="region of interest" description="Disordered" evidence="2">
    <location>
        <begin position="971"/>
        <end position="1096"/>
    </location>
</feature>
<feature type="compositionally biased region" description="Low complexity" evidence="2">
    <location>
        <begin position="35"/>
        <end position="59"/>
    </location>
</feature>
<feature type="compositionally biased region" description="Basic residues" evidence="2">
    <location>
        <begin position="82"/>
        <end position="95"/>
    </location>
</feature>
<feature type="compositionally biased region" description="Pro residues" evidence="2">
    <location>
        <begin position="101"/>
        <end position="113"/>
    </location>
</feature>
<feature type="compositionally biased region" description="Basic and acidic residues" evidence="2">
    <location>
        <begin position="540"/>
        <end position="559"/>
    </location>
</feature>
<feature type="compositionally biased region" description="Basic and acidic residues" evidence="2">
    <location>
        <begin position="1041"/>
        <end position="1050"/>
    </location>
</feature>
<feature type="compositionally biased region" description="Basic and acidic residues" evidence="2">
    <location>
        <begin position="1076"/>
        <end position="1096"/>
    </location>
</feature>
<feature type="modified residue" description="Omega-N-methylarginine" evidence="1">
    <location>
        <position position="58"/>
    </location>
</feature>
<feature type="modified residue" description="Omega-N-methylarginine" evidence="1">
    <location>
        <position position="977"/>
    </location>
</feature>
<feature type="cross-link" description="Glycyl lysine isopeptide (Lys-Gly) (interchain with G-Cter in SUMO2)" evidence="8">
    <location>
        <position position="1042"/>
    </location>
</feature>
<feature type="splice variant" id="VSP_010519" description="In isoform 2." evidence="4 5 6">
    <original>VFQSL</original>
    <variation>QAAML</variation>
    <location>
        <begin position="234"/>
        <end position="238"/>
    </location>
</feature>
<feature type="splice variant" id="VSP_010520" description="In isoform 2." evidence="4 5 6">
    <location>
        <begin position="239"/>
        <end position="1096"/>
    </location>
</feature>
<feature type="sequence variant" id="VAR_047538" description="In dbSNP:rs2495783.">
    <original>T</original>
    <variation>I</variation>
    <location>
        <position position="82"/>
    </location>
</feature>
<feature type="sequence variant" id="VAR_062001" description="In dbSNP:rs41304786.">
    <original>M</original>
    <variation>I</variation>
    <location>
        <position position="934"/>
    </location>
</feature>
<comment type="alternative products">
    <event type="alternative splicing"/>
    <isoform>
        <id>Q9NX05-1</id>
        <name>1</name>
        <sequence type="displayed"/>
    </isoform>
    <isoform>
        <id>Q9NX05-2</id>
        <name>2</name>
        <sequence type="described" ref="VSP_010519 VSP_010520"/>
    </isoform>
</comment>
<comment type="tissue specificity">
    <text evidence="3">Expressed at low levels in a number of tissues.</text>
</comment>
<comment type="similarity">
    <text evidence="7">Belongs to the constitutive coactivator of PPAR-gamma family.</text>
</comment>
<comment type="sequence caution" evidence="7">
    <conflict type="erroneous translation">
        <sequence resource="EMBL-CDS" id="AAM82751"/>
    </conflict>
    <text>Wrong choice of frame.</text>
</comment>
<comment type="sequence caution" evidence="7">
    <conflict type="erroneous translation">
        <sequence resource="EMBL-CDS" id="BAA91219"/>
    </conflict>
    <text>Wrong choice of frame.</text>
</comment>
<sequence length="1096" mass="120576">MGVQGFQEFLEKRCPGAVVPVDLLKLARTVSRQQQQQHLHRQLPPTAALAPGAPRAARGSVPLQPPLPPAALGAYSGGAGPTRHHHPAHHFHHHGQAQPGLHPPLPPPPPPQLPGARVLVDAGSALPRLYGGYQTDWVCGGQWNAMLGYLSALCQACAYPGGDGLELVVMFPGGLGKDRLAEWGRRCQAERQTAQLIVGHVGNKGTPPPRAWFLPPACLSHCVRLALIRFRVKVFQSLEDHHLEVVAFFRENGFHGLLAHDSEYALYNIPSYYSSHALKLSWNGKNLTTNQFLMQEVAKQLGLKRMNFPIFAALLGNHILPDEDLAAFHWSLLGPEHPLASLKVRAHQLVLPPCDVVIKAVSEYVSSIKDPSNLDVVGKDVFKQSQSRTEDKIERFKKAVEYYSVTTKLSSLPVGPSFLGFRNNRLGNPPLPRNQVGTISAGKPMFSHQVPQKVKYPPPFPVGPNSSLLFSSHALGESHAFSEDPMLQNSPFANWAVSYDSSASQFPNYLPSKASPPLGPDSSHSSSSDGDEPNGASSDHITEAFHHQPEWGNPNRDRGSWAQPVDTGVSEASLGDGEPHIPSLLSMSTRNHMDITIPPLPPVAPEVLRVAEHRHRRGLMYPYIYHVLTKGEIKIPVCIEDECNMELPPAALLFRSARQYVYGVLFSLAETQRKMERLAMRRRLPVEVPSVILKEWSAYKGKSPQTPELVSALTFREWTCPNLKKLWLGKAVEDKNRRMRAFLACMKSDTPSMLNPANVPTHLLLMCCVLRYMVQWPGGRILHRHELDTFLAQAVSTQLYEPDRLQELKIEKLDARGIQLAALFMSGVDTALFANDACGQPVPWEHCCPWIYFDGKLFQSKLIKAGRERVSLVELCDGQADLATKVEKMRQSILEGVNMNHPPPSALLPSPTFVPPMVPSLYPVSLYSRAMGSMPLPPQGRSRGFAGLHPIPPQGGKLEIAGMVVGQWAGSRSSRGRGSFGMQVVSVGGPGKGHGKEQTGRGSKGHKKGNKQGSSDGVSKSLELHQGRSRSQVNGNSGALIKEEKSDHRLPAPSQCALSRDSNECNNGNRYLPMNNREKNHLQEQKLETVAQRKED</sequence>
<proteinExistence type="evidence at protein level"/>
<organism>
    <name type="scientific">Homo sapiens</name>
    <name type="common">Human</name>
    <dbReference type="NCBI Taxonomy" id="9606"/>
    <lineage>
        <taxon>Eukaryota</taxon>
        <taxon>Metazoa</taxon>
        <taxon>Chordata</taxon>
        <taxon>Craniata</taxon>
        <taxon>Vertebrata</taxon>
        <taxon>Euteleostomi</taxon>
        <taxon>Mammalia</taxon>
        <taxon>Eutheria</taxon>
        <taxon>Euarchontoglires</taxon>
        <taxon>Primates</taxon>
        <taxon>Haplorrhini</taxon>
        <taxon>Catarrhini</taxon>
        <taxon>Hominidae</taxon>
        <taxon>Homo</taxon>
    </lineage>
</organism>
<protein>
    <recommendedName>
        <fullName>Constitutive coactivator of PPAR-gamma-like protein 2</fullName>
    </recommendedName>
    <alternativeName>
        <fullName>Protein FAM120C</fullName>
    </alternativeName>
    <alternativeName>
        <fullName>Tumor antigen BJ-HCC-21</fullName>
    </alternativeName>
</protein>
<dbReference type="EMBL" id="AY150025">
    <property type="protein sequence ID" value="AAO24121.1"/>
    <property type="molecule type" value="mRNA"/>
</dbReference>
<dbReference type="EMBL" id="AY121803">
    <property type="protein sequence ID" value="AAM82751.1"/>
    <property type="status" value="ALT_SEQ"/>
    <property type="molecule type" value="mRNA"/>
</dbReference>
<dbReference type="EMBL" id="AK000513">
    <property type="protein sequence ID" value="BAA91219.1"/>
    <property type="status" value="ALT_SEQ"/>
    <property type="molecule type" value="mRNA"/>
</dbReference>
<dbReference type="EMBL" id="AL589872">
    <property type="status" value="NOT_ANNOTATED_CDS"/>
    <property type="molecule type" value="Genomic_DNA"/>
</dbReference>
<dbReference type="EMBL" id="Z84469">
    <property type="status" value="NOT_ANNOTATED_CDS"/>
    <property type="molecule type" value="Genomic_DNA"/>
</dbReference>
<dbReference type="EMBL" id="BC016138">
    <property type="protein sequence ID" value="AAH16138.2"/>
    <property type="molecule type" value="mRNA"/>
</dbReference>
<dbReference type="EMBL" id="BC136413">
    <property type="protein sequence ID" value="AAI36414.1"/>
    <property type="molecule type" value="mRNA"/>
</dbReference>
<dbReference type="CCDS" id="CCDS14356.1">
    <molecule id="Q9NX05-1"/>
</dbReference>
<dbReference type="CCDS" id="CCDS55421.1">
    <molecule id="Q9NX05-2"/>
</dbReference>
<dbReference type="RefSeq" id="NP_060318.4">
    <molecule id="Q9NX05-1"/>
    <property type="nucleotide sequence ID" value="NM_017848.5"/>
</dbReference>
<dbReference type="RefSeq" id="NP_940858.2">
    <molecule id="Q9NX05-2"/>
    <property type="nucleotide sequence ID" value="NM_198456.3"/>
</dbReference>
<dbReference type="BioGRID" id="120292">
    <property type="interactions" value="187"/>
</dbReference>
<dbReference type="FunCoup" id="Q9NX05">
    <property type="interactions" value="1491"/>
</dbReference>
<dbReference type="IntAct" id="Q9NX05">
    <property type="interactions" value="18"/>
</dbReference>
<dbReference type="MINT" id="Q9NX05"/>
<dbReference type="STRING" id="9606.ENSP00000364324"/>
<dbReference type="GlyGen" id="Q9NX05">
    <property type="glycosylation" value="1 site, 1 O-linked glycan (1 site)"/>
</dbReference>
<dbReference type="iPTMnet" id="Q9NX05"/>
<dbReference type="PhosphoSitePlus" id="Q9NX05"/>
<dbReference type="SwissPalm" id="Q9NX05"/>
<dbReference type="BioMuta" id="FAM120C"/>
<dbReference type="DMDM" id="311033453"/>
<dbReference type="jPOST" id="Q9NX05"/>
<dbReference type="MassIVE" id="Q9NX05"/>
<dbReference type="PaxDb" id="9606-ENSP00000364324"/>
<dbReference type="PeptideAtlas" id="Q9NX05"/>
<dbReference type="ProteomicsDB" id="83015">
    <molecule id="Q9NX05-1"/>
</dbReference>
<dbReference type="ProteomicsDB" id="83016">
    <molecule id="Q9NX05-2"/>
</dbReference>
<dbReference type="Pumba" id="Q9NX05"/>
<dbReference type="Antibodypedia" id="26758">
    <property type="antibodies" value="61 antibodies from 15 providers"/>
</dbReference>
<dbReference type="DNASU" id="54954"/>
<dbReference type="Ensembl" id="ENST00000375180.7">
    <molecule id="Q9NX05-1"/>
    <property type="protein sequence ID" value="ENSP00000364324.2"/>
    <property type="gene ID" value="ENSG00000184083.12"/>
</dbReference>
<dbReference type="Ensembl" id="ENST00000477084.1">
    <molecule id="Q9NX05-2"/>
    <property type="protein sequence ID" value="ENSP00000420718.1"/>
    <property type="gene ID" value="ENSG00000184083.12"/>
</dbReference>
<dbReference type="GeneID" id="54954"/>
<dbReference type="KEGG" id="hsa:54954"/>
<dbReference type="MANE-Select" id="ENST00000375180.7">
    <property type="protein sequence ID" value="ENSP00000364324.2"/>
    <property type="RefSeq nucleotide sequence ID" value="NM_017848.6"/>
    <property type="RefSeq protein sequence ID" value="NP_060318.4"/>
</dbReference>
<dbReference type="UCSC" id="uc004dsz.5">
    <molecule id="Q9NX05-1"/>
    <property type="organism name" value="human"/>
</dbReference>
<dbReference type="AGR" id="HGNC:16949"/>
<dbReference type="CTD" id="54954"/>
<dbReference type="DisGeNET" id="54954"/>
<dbReference type="GeneCards" id="FAM120C"/>
<dbReference type="HGNC" id="HGNC:16949">
    <property type="gene designation" value="FAM120C"/>
</dbReference>
<dbReference type="HPA" id="ENSG00000184083">
    <property type="expression patterns" value="Low tissue specificity"/>
</dbReference>
<dbReference type="MIM" id="300741">
    <property type="type" value="gene"/>
</dbReference>
<dbReference type="neXtProt" id="NX_Q9NX05"/>
<dbReference type="OpenTargets" id="ENSG00000184083"/>
<dbReference type="PharmGKB" id="PA134932227"/>
<dbReference type="VEuPathDB" id="HostDB:ENSG00000184083"/>
<dbReference type="eggNOG" id="ENOG502QQNQ">
    <property type="taxonomic scope" value="Eukaryota"/>
</dbReference>
<dbReference type="GeneTree" id="ENSGT00530000063168"/>
<dbReference type="HOGENOM" id="CLU_008339_0_0_1"/>
<dbReference type="InParanoid" id="Q9NX05"/>
<dbReference type="OMA" id="RYLPMNN"/>
<dbReference type="OrthoDB" id="10061469at2759"/>
<dbReference type="PAN-GO" id="Q9NX05">
    <property type="GO annotations" value="1 GO annotation based on evolutionary models"/>
</dbReference>
<dbReference type="PhylomeDB" id="Q9NX05"/>
<dbReference type="TreeFam" id="TF328642"/>
<dbReference type="PathwayCommons" id="Q9NX05"/>
<dbReference type="SignaLink" id="Q9NX05"/>
<dbReference type="BioGRID-ORCS" id="54954">
    <property type="hits" value="8 hits in 777 CRISPR screens"/>
</dbReference>
<dbReference type="CD-CODE" id="232F8A39">
    <property type="entry name" value="P-body"/>
</dbReference>
<dbReference type="CD-CODE" id="DEE660B4">
    <property type="entry name" value="Stress granule"/>
</dbReference>
<dbReference type="ChiTaRS" id="FAM120C">
    <property type="organism name" value="human"/>
</dbReference>
<dbReference type="GeneWiki" id="FAM120C_(gene)"/>
<dbReference type="GenomeRNAi" id="54954"/>
<dbReference type="Pharos" id="Q9NX05">
    <property type="development level" value="Tbio"/>
</dbReference>
<dbReference type="PRO" id="PR:Q9NX05"/>
<dbReference type="Proteomes" id="UP000005640">
    <property type="component" value="Chromosome X"/>
</dbReference>
<dbReference type="RNAct" id="Q9NX05">
    <property type="molecule type" value="protein"/>
</dbReference>
<dbReference type="Bgee" id="ENSG00000184083">
    <property type="expression patterns" value="Expressed in inferior vagus X ganglion and 183 other cell types or tissues"/>
</dbReference>
<dbReference type="ExpressionAtlas" id="Q9NX05">
    <property type="expression patterns" value="baseline and differential"/>
</dbReference>
<dbReference type="GO" id="GO:0005634">
    <property type="term" value="C:nucleus"/>
    <property type="evidence" value="ECO:0000318"/>
    <property type="project" value="GO_Central"/>
</dbReference>
<dbReference type="GO" id="GO:0003723">
    <property type="term" value="F:RNA binding"/>
    <property type="evidence" value="ECO:0007005"/>
    <property type="project" value="UniProtKB"/>
</dbReference>
<dbReference type="FunFam" id="3.40.50.1010:FF:000009">
    <property type="entry name" value="Constitutive coactivator of PPAR-gamma-like protein 1"/>
    <property type="match status" value="1"/>
</dbReference>
<dbReference type="InterPro" id="IPR026784">
    <property type="entry name" value="Coact_PPARg"/>
</dbReference>
<dbReference type="InterPro" id="IPR029060">
    <property type="entry name" value="PIN-like_dom_sf"/>
</dbReference>
<dbReference type="PANTHER" id="PTHR15976">
    <property type="entry name" value="CONSTITUTIVE COACTIVATOR OF PEROXISOME PROLIFERATOR-ACTIVATED RECEPTOR GAMMA"/>
    <property type="match status" value="1"/>
</dbReference>
<dbReference type="PANTHER" id="PTHR15976:SF15">
    <property type="entry name" value="CONSTITUTIVE COACTIVATOR OF PPAR-GAMMA-LIKE PROTEIN 2"/>
    <property type="match status" value="1"/>
</dbReference>
<dbReference type="SUPFAM" id="SSF88723">
    <property type="entry name" value="PIN domain-like"/>
    <property type="match status" value="1"/>
</dbReference>
<keyword id="KW-0025">Alternative splicing</keyword>
<keyword id="KW-1017">Isopeptide bond</keyword>
<keyword id="KW-0488">Methylation</keyword>
<keyword id="KW-1267">Proteomics identification</keyword>
<keyword id="KW-1185">Reference proteome</keyword>
<keyword id="KW-0832">Ubl conjugation</keyword>